<proteinExistence type="inferred from homology"/>
<organism>
    <name type="scientific">Leptospira biflexa serovar Patoc (strain Patoc 1 / Ames)</name>
    <dbReference type="NCBI Taxonomy" id="355278"/>
    <lineage>
        <taxon>Bacteria</taxon>
        <taxon>Pseudomonadati</taxon>
        <taxon>Spirochaetota</taxon>
        <taxon>Spirochaetia</taxon>
        <taxon>Leptospirales</taxon>
        <taxon>Leptospiraceae</taxon>
        <taxon>Leptospira</taxon>
    </lineage>
</organism>
<feature type="chain" id="PRO_0000374358" description="tRNA-2-methylthio-N(6)-dimethylallyladenosine synthase">
    <location>
        <begin position="1"/>
        <end position="458"/>
    </location>
</feature>
<feature type="domain" description="MTTase N-terminal" evidence="1">
    <location>
        <begin position="18"/>
        <end position="134"/>
    </location>
</feature>
<feature type="domain" description="Radical SAM core" evidence="2">
    <location>
        <begin position="157"/>
        <end position="385"/>
    </location>
</feature>
<feature type="domain" description="TRAM" evidence="1">
    <location>
        <begin position="388"/>
        <end position="458"/>
    </location>
</feature>
<feature type="binding site" evidence="1">
    <location>
        <position position="27"/>
    </location>
    <ligand>
        <name>[4Fe-4S] cluster</name>
        <dbReference type="ChEBI" id="CHEBI:49883"/>
        <label>1</label>
    </ligand>
</feature>
<feature type="binding site" evidence="1">
    <location>
        <position position="63"/>
    </location>
    <ligand>
        <name>[4Fe-4S] cluster</name>
        <dbReference type="ChEBI" id="CHEBI:49883"/>
        <label>1</label>
    </ligand>
</feature>
<feature type="binding site" evidence="1">
    <location>
        <position position="97"/>
    </location>
    <ligand>
        <name>[4Fe-4S] cluster</name>
        <dbReference type="ChEBI" id="CHEBI:49883"/>
        <label>1</label>
    </ligand>
</feature>
<feature type="binding site" evidence="1">
    <location>
        <position position="171"/>
    </location>
    <ligand>
        <name>[4Fe-4S] cluster</name>
        <dbReference type="ChEBI" id="CHEBI:49883"/>
        <label>2</label>
        <note>4Fe-4S-S-AdoMet</note>
    </ligand>
</feature>
<feature type="binding site" evidence="1">
    <location>
        <position position="175"/>
    </location>
    <ligand>
        <name>[4Fe-4S] cluster</name>
        <dbReference type="ChEBI" id="CHEBI:49883"/>
        <label>2</label>
        <note>4Fe-4S-S-AdoMet</note>
    </ligand>
</feature>
<feature type="binding site" evidence="1">
    <location>
        <position position="178"/>
    </location>
    <ligand>
        <name>[4Fe-4S] cluster</name>
        <dbReference type="ChEBI" id="CHEBI:49883"/>
        <label>2</label>
        <note>4Fe-4S-S-AdoMet</note>
    </ligand>
</feature>
<accession>B0S9E2</accession>
<gene>
    <name evidence="1" type="primary">miaB</name>
    <name type="ordered locus">LBF_1762</name>
</gene>
<protein>
    <recommendedName>
        <fullName evidence="1">tRNA-2-methylthio-N(6)-dimethylallyladenosine synthase</fullName>
        <ecNumber evidence="1">2.8.4.3</ecNumber>
    </recommendedName>
    <alternativeName>
        <fullName evidence="1">(Dimethylallyl)adenosine tRNA methylthiotransferase MiaB</fullName>
    </alternativeName>
    <alternativeName>
        <fullName evidence="1">tRNA-i(6)A37 methylthiotransferase</fullName>
    </alternativeName>
</protein>
<keyword id="KW-0004">4Fe-4S</keyword>
<keyword id="KW-0963">Cytoplasm</keyword>
<keyword id="KW-0408">Iron</keyword>
<keyword id="KW-0411">Iron-sulfur</keyword>
<keyword id="KW-0479">Metal-binding</keyword>
<keyword id="KW-0949">S-adenosyl-L-methionine</keyword>
<keyword id="KW-0808">Transferase</keyword>
<keyword id="KW-0819">tRNA processing</keyword>
<evidence type="ECO:0000255" key="1">
    <source>
        <dbReference type="HAMAP-Rule" id="MF_01864"/>
    </source>
</evidence>
<evidence type="ECO:0000255" key="2">
    <source>
        <dbReference type="PROSITE-ProRule" id="PRU01266"/>
    </source>
</evidence>
<comment type="function">
    <text evidence="1">Catalyzes the methylthiolation of N6-(dimethylallyl)adenosine (i(6)A), leading to the formation of 2-methylthio-N6-(dimethylallyl)adenosine (ms(2)i(6)A) at position 37 in tRNAs that read codons beginning with uridine.</text>
</comment>
<comment type="catalytic activity">
    <reaction evidence="1">
        <text>N(6)-dimethylallyladenosine(37) in tRNA + (sulfur carrier)-SH + AH2 + 2 S-adenosyl-L-methionine = 2-methylsulfanyl-N(6)-dimethylallyladenosine(37) in tRNA + (sulfur carrier)-H + 5'-deoxyadenosine + L-methionine + A + S-adenosyl-L-homocysteine + 2 H(+)</text>
        <dbReference type="Rhea" id="RHEA:37067"/>
        <dbReference type="Rhea" id="RHEA-COMP:10375"/>
        <dbReference type="Rhea" id="RHEA-COMP:10376"/>
        <dbReference type="Rhea" id="RHEA-COMP:14737"/>
        <dbReference type="Rhea" id="RHEA-COMP:14739"/>
        <dbReference type="ChEBI" id="CHEBI:13193"/>
        <dbReference type="ChEBI" id="CHEBI:15378"/>
        <dbReference type="ChEBI" id="CHEBI:17319"/>
        <dbReference type="ChEBI" id="CHEBI:17499"/>
        <dbReference type="ChEBI" id="CHEBI:29917"/>
        <dbReference type="ChEBI" id="CHEBI:57844"/>
        <dbReference type="ChEBI" id="CHEBI:57856"/>
        <dbReference type="ChEBI" id="CHEBI:59789"/>
        <dbReference type="ChEBI" id="CHEBI:64428"/>
        <dbReference type="ChEBI" id="CHEBI:74415"/>
        <dbReference type="ChEBI" id="CHEBI:74417"/>
        <dbReference type="EC" id="2.8.4.3"/>
    </reaction>
</comment>
<comment type="cofactor">
    <cofactor evidence="1">
        <name>[4Fe-4S] cluster</name>
        <dbReference type="ChEBI" id="CHEBI:49883"/>
    </cofactor>
    <text evidence="1">Binds 2 [4Fe-4S] clusters. One cluster is coordinated with 3 cysteines and an exchangeable S-adenosyl-L-methionine.</text>
</comment>
<comment type="subunit">
    <text evidence="1">Monomer.</text>
</comment>
<comment type="subcellular location">
    <subcellularLocation>
        <location evidence="1">Cytoplasm</location>
    </subcellularLocation>
</comment>
<comment type="similarity">
    <text evidence="1">Belongs to the methylthiotransferase family. MiaB subfamily.</text>
</comment>
<dbReference type="EC" id="2.8.4.3" evidence="1"/>
<dbReference type="EMBL" id="CP000777">
    <property type="protein sequence ID" value="ABZ94269.1"/>
    <property type="molecule type" value="Genomic_DNA"/>
</dbReference>
<dbReference type="RefSeq" id="WP_012388799.1">
    <property type="nucleotide sequence ID" value="NC_010842.1"/>
</dbReference>
<dbReference type="SMR" id="B0S9E2"/>
<dbReference type="KEGG" id="lbf:LBF_1762"/>
<dbReference type="HOGENOM" id="CLU_018697_2_0_12"/>
<dbReference type="GO" id="GO:0005829">
    <property type="term" value="C:cytosol"/>
    <property type="evidence" value="ECO:0007669"/>
    <property type="project" value="TreeGrafter"/>
</dbReference>
<dbReference type="GO" id="GO:0051539">
    <property type="term" value="F:4 iron, 4 sulfur cluster binding"/>
    <property type="evidence" value="ECO:0007669"/>
    <property type="project" value="UniProtKB-UniRule"/>
</dbReference>
<dbReference type="GO" id="GO:0046872">
    <property type="term" value="F:metal ion binding"/>
    <property type="evidence" value="ECO:0007669"/>
    <property type="project" value="UniProtKB-KW"/>
</dbReference>
<dbReference type="GO" id="GO:0035597">
    <property type="term" value="F:N6-isopentenyladenosine methylthiotransferase activity"/>
    <property type="evidence" value="ECO:0007669"/>
    <property type="project" value="TreeGrafter"/>
</dbReference>
<dbReference type="CDD" id="cd01335">
    <property type="entry name" value="Radical_SAM"/>
    <property type="match status" value="1"/>
</dbReference>
<dbReference type="FunFam" id="3.40.50.12160:FF:000003">
    <property type="entry name" value="CDK5 regulatory subunit-associated protein 1"/>
    <property type="match status" value="1"/>
</dbReference>
<dbReference type="FunFam" id="3.80.30.20:FF:000001">
    <property type="entry name" value="tRNA-2-methylthio-N(6)-dimethylallyladenosine synthase 2"/>
    <property type="match status" value="1"/>
</dbReference>
<dbReference type="Gene3D" id="3.40.50.12160">
    <property type="entry name" value="Methylthiotransferase, N-terminal domain"/>
    <property type="match status" value="1"/>
</dbReference>
<dbReference type="Gene3D" id="3.80.30.20">
    <property type="entry name" value="tm_1862 like domain"/>
    <property type="match status" value="1"/>
</dbReference>
<dbReference type="HAMAP" id="MF_01864">
    <property type="entry name" value="tRNA_metthiotr_MiaB"/>
    <property type="match status" value="1"/>
</dbReference>
<dbReference type="InterPro" id="IPR006638">
    <property type="entry name" value="Elp3/MiaA/NifB-like_rSAM"/>
</dbReference>
<dbReference type="InterPro" id="IPR005839">
    <property type="entry name" value="Methylthiotransferase"/>
</dbReference>
<dbReference type="InterPro" id="IPR020612">
    <property type="entry name" value="Methylthiotransferase_CS"/>
</dbReference>
<dbReference type="InterPro" id="IPR013848">
    <property type="entry name" value="Methylthiotransferase_N"/>
</dbReference>
<dbReference type="InterPro" id="IPR038135">
    <property type="entry name" value="Methylthiotransferase_N_sf"/>
</dbReference>
<dbReference type="InterPro" id="IPR006463">
    <property type="entry name" value="MiaB_methiolase"/>
</dbReference>
<dbReference type="InterPro" id="IPR007197">
    <property type="entry name" value="rSAM"/>
</dbReference>
<dbReference type="InterPro" id="IPR023404">
    <property type="entry name" value="rSAM_horseshoe"/>
</dbReference>
<dbReference type="InterPro" id="IPR002792">
    <property type="entry name" value="TRAM_dom"/>
</dbReference>
<dbReference type="NCBIfam" id="TIGR01574">
    <property type="entry name" value="miaB-methiolase"/>
    <property type="match status" value="1"/>
</dbReference>
<dbReference type="NCBIfam" id="TIGR00089">
    <property type="entry name" value="MiaB/RimO family radical SAM methylthiotransferase"/>
    <property type="match status" value="1"/>
</dbReference>
<dbReference type="PANTHER" id="PTHR43020">
    <property type="entry name" value="CDK5 REGULATORY SUBUNIT-ASSOCIATED PROTEIN 1"/>
    <property type="match status" value="1"/>
</dbReference>
<dbReference type="PANTHER" id="PTHR43020:SF2">
    <property type="entry name" value="MITOCHONDRIAL TRNA METHYLTHIOTRANSFERASE CDK5RAP1"/>
    <property type="match status" value="1"/>
</dbReference>
<dbReference type="Pfam" id="PF04055">
    <property type="entry name" value="Radical_SAM"/>
    <property type="match status" value="1"/>
</dbReference>
<dbReference type="Pfam" id="PF01938">
    <property type="entry name" value="TRAM"/>
    <property type="match status" value="1"/>
</dbReference>
<dbReference type="Pfam" id="PF00919">
    <property type="entry name" value="UPF0004"/>
    <property type="match status" value="1"/>
</dbReference>
<dbReference type="SFLD" id="SFLDF00273">
    <property type="entry name" value="(dimethylallyl)adenosine_tRNA"/>
    <property type="match status" value="1"/>
</dbReference>
<dbReference type="SFLD" id="SFLDG01082">
    <property type="entry name" value="B12-binding_domain_containing"/>
    <property type="match status" value="1"/>
</dbReference>
<dbReference type="SFLD" id="SFLDF00413">
    <property type="entry name" value="CDK5RAP1"/>
    <property type="match status" value="1"/>
</dbReference>
<dbReference type="SFLD" id="SFLDS00029">
    <property type="entry name" value="Radical_SAM"/>
    <property type="match status" value="1"/>
</dbReference>
<dbReference type="SMART" id="SM00729">
    <property type="entry name" value="Elp3"/>
    <property type="match status" value="1"/>
</dbReference>
<dbReference type="SUPFAM" id="SSF102114">
    <property type="entry name" value="Radical SAM enzymes"/>
    <property type="match status" value="1"/>
</dbReference>
<dbReference type="PROSITE" id="PS51449">
    <property type="entry name" value="MTTASE_N"/>
    <property type="match status" value="1"/>
</dbReference>
<dbReference type="PROSITE" id="PS01278">
    <property type="entry name" value="MTTASE_RADICAL"/>
    <property type="match status" value="1"/>
</dbReference>
<dbReference type="PROSITE" id="PS51918">
    <property type="entry name" value="RADICAL_SAM"/>
    <property type="match status" value="1"/>
</dbReference>
<dbReference type="PROSITE" id="PS50926">
    <property type="entry name" value="TRAM"/>
    <property type="match status" value="1"/>
</dbReference>
<name>MIAB_LEPBA</name>
<sequence length="458" mass="52294">MNPTLTESQTLTPTIQLGKVYVETYGCQMNEYDSGIVKELFRKEHYETTNVVEESDIIFLNTCAVRENAHAKIYGRLQSLGYLKKKNPNLVIGVLGCMAQNLGEDLFHQELPLDLIVGPDNYRTLPELIQNIRNGEKDVQLTRLSRSETYDELEPKVVNGIQAFVTIMRGCNNFCTFCVVPYTRGRERSREPKSIIHEIKQLQEMGVKQVTLLGQNVNSYSYESYDFCALVESILKETTIERVRFTSPHPKDFPDHLISLMAKEDRFSSQIHMPLQAGSSKVLRDMKRSYTKEEYLDLVKKIQSVIPDIGITSDIIVGFPGETEEEFLETLEVVKKVKFDMSYMFKYSEREGTIAKRKFIDDVPEEVKSRRLIELVELQTKISLEKNTSKIGKIFSILIENTSKKSKQELCGRSHCGRMVVFPIPEGMSQDLSDWIGKTVNVLIEQATSATLKGKLIV</sequence>
<reference key="1">
    <citation type="journal article" date="2008" name="PLoS ONE">
        <title>Genome sequence of the saprophyte Leptospira biflexa provides insights into the evolution of Leptospira and the pathogenesis of leptospirosis.</title>
        <authorList>
            <person name="Picardeau M."/>
            <person name="Bulach D.M."/>
            <person name="Bouchier C."/>
            <person name="Zuerner R.L."/>
            <person name="Zidane N."/>
            <person name="Wilson P.J."/>
            <person name="Creno S."/>
            <person name="Kuczek E.S."/>
            <person name="Bommezzadri S."/>
            <person name="Davis J.C."/>
            <person name="McGrath A."/>
            <person name="Johnson M.J."/>
            <person name="Boursaux-Eude C."/>
            <person name="Seemann T."/>
            <person name="Rouy Z."/>
            <person name="Coppel R.L."/>
            <person name="Rood J.I."/>
            <person name="Lajus A."/>
            <person name="Davies J.K."/>
            <person name="Medigue C."/>
            <person name="Adler B."/>
        </authorList>
    </citation>
    <scope>NUCLEOTIDE SEQUENCE [LARGE SCALE GENOMIC DNA]</scope>
    <source>
        <strain>Patoc 1 / Ames</strain>
    </source>
</reference>